<organism>
    <name type="scientific">Pseudomonas putida (strain W619)</name>
    <dbReference type="NCBI Taxonomy" id="390235"/>
    <lineage>
        <taxon>Bacteria</taxon>
        <taxon>Pseudomonadati</taxon>
        <taxon>Pseudomonadota</taxon>
        <taxon>Gammaproteobacteria</taxon>
        <taxon>Pseudomonadales</taxon>
        <taxon>Pseudomonadaceae</taxon>
        <taxon>Pseudomonas</taxon>
    </lineage>
</organism>
<comment type="function">
    <text evidence="1">Catalyzes the phosphorylation of D-glycero-D-manno-heptose 7-phosphate at the C-1 position to selectively form D-glycero-beta-D-manno-heptose-1,7-bisphosphate.</text>
</comment>
<comment type="function">
    <text evidence="1">Catalyzes the ADP transfer from ATP to D-glycero-beta-D-manno-heptose 1-phosphate, yielding ADP-D-glycero-beta-D-manno-heptose.</text>
</comment>
<comment type="catalytic activity">
    <reaction evidence="1">
        <text>D-glycero-beta-D-manno-heptose 7-phosphate + ATP = D-glycero-beta-D-manno-heptose 1,7-bisphosphate + ADP + H(+)</text>
        <dbReference type="Rhea" id="RHEA:27473"/>
        <dbReference type="ChEBI" id="CHEBI:15378"/>
        <dbReference type="ChEBI" id="CHEBI:30616"/>
        <dbReference type="ChEBI" id="CHEBI:60204"/>
        <dbReference type="ChEBI" id="CHEBI:60208"/>
        <dbReference type="ChEBI" id="CHEBI:456216"/>
        <dbReference type="EC" id="2.7.1.167"/>
    </reaction>
</comment>
<comment type="catalytic activity">
    <reaction evidence="1">
        <text>D-glycero-beta-D-manno-heptose 1-phosphate + ATP + H(+) = ADP-D-glycero-beta-D-manno-heptose + diphosphate</text>
        <dbReference type="Rhea" id="RHEA:27465"/>
        <dbReference type="ChEBI" id="CHEBI:15378"/>
        <dbReference type="ChEBI" id="CHEBI:30616"/>
        <dbReference type="ChEBI" id="CHEBI:33019"/>
        <dbReference type="ChEBI" id="CHEBI:59967"/>
        <dbReference type="ChEBI" id="CHEBI:61593"/>
        <dbReference type="EC" id="2.7.7.70"/>
    </reaction>
</comment>
<comment type="pathway">
    <text evidence="1">Nucleotide-sugar biosynthesis; ADP-L-glycero-beta-D-manno-heptose biosynthesis; ADP-L-glycero-beta-D-manno-heptose from D-glycero-beta-D-manno-heptose 7-phosphate: step 1/4.</text>
</comment>
<comment type="pathway">
    <text evidence="1">Nucleotide-sugar biosynthesis; ADP-L-glycero-beta-D-manno-heptose biosynthesis; ADP-L-glycero-beta-D-manno-heptose from D-glycero-beta-D-manno-heptose 7-phosphate: step 3/4.</text>
</comment>
<comment type="subunit">
    <text evidence="1">Homodimer.</text>
</comment>
<comment type="similarity">
    <text evidence="1">In the N-terminal section; belongs to the carbohydrate kinase PfkB family.</text>
</comment>
<comment type="similarity">
    <text evidence="1">In the C-terminal section; belongs to the cytidylyltransferase family.</text>
</comment>
<accession>B1J331</accession>
<reference key="1">
    <citation type="submission" date="2008-02" db="EMBL/GenBank/DDBJ databases">
        <title>Complete sequence of Pseudomonas putida W619.</title>
        <authorList>
            <person name="Copeland A."/>
            <person name="Lucas S."/>
            <person name="Lapidus A."/>
            <person name="Barry K."/>
            <person name="Detter J.C."/>
            <person name="Glavina del Rio T."/>
            <person name="Dalin E."/>
            <person name="Tice H."/>
            <person name="Pitluck S."/>
            <person name="Chain P."/>
            <person name="Malfatti S."/>
            <person name="Shin M."/>
            <person name="Vergez L."/>
            <person name="Schmutz J."/>
            <person name="Larimer F."/>
            <person name="Land M."/>
            <person name="Hauser L."/>
            <person name="Kyrpides N."/>
            <person name="Kim E."/>
            <person name="Taghavi S."/>
            <person name="Vangronsveld D."/>
            <person name="van der Lelie D."/>
            <person name="Richardson P."/>
        </authorList>
    </citation>
    <scope>NUCLEOTIDE SEQUENCE [LARGE SCALE GENOMIC DNA]</scope>
    <source>
        <strain>W619</strain>
    </source>
</reference>
<dbReference type="EC" id="2.7.1.167" evidence="1"/>
<dbReference type="EC" id="2.7.7.70" evidence="1"/>
<dbReference type="EMBL" id="CP000949">
    <property type="protein sequence ID" value="ACA71037.1"/>
    <property type="molecule type" value="Genomic_DNA"/>
</dbReference>
<dbReference type="SMR" id="B1J331"/>
<dbReference type="STRING" id="390235.PputW619_0532"/>
<dbReference type="KEGG" id="ppw:PputW619_0532"/>
<dbReference type="eggNOG" id="COG0615">
    <property type="taxonomic scope" value="Bacteria"/>
</dbReference>
<dbReference type="eggNOG" id="COG2870">
    <property type="taxonomic scope" value="Bacteria"/>
</dbReference>
<dbReference type="HOGENOM" id="CLU_021150_2_1_6"/>
<dbReference type="OrthoDB" id="9802794at2"/>
<dbReference type="UniPathway" id="UPA00356">
    <property type="reaction ID" value="UER00437"/>
</dbReference>
<dbReference type="UniPathway" id="UPA00356">
    <property type="reaction ID" value="UER00439"/>
</dbReference>
<dbReference type="GO" id="GO:0005829">
    <property type="term" value="C:cytosol"/>
    <property type="evidence" value="ECO:0007669"/>
    <property type="project" value="TreeGrafter"/>
</dbReference>
<dbReference type="GO" id="GO:0005524">
    <property type="term" value="F:ATP binding"/>
    <property type="evidence" value="ECO:0007669"/>
    <property type="project" value="UniProtKB-UniRule"/>
</dbReference>
<dbReference type="GO" id="GO:0033785">
    <property type="term" value="F:heptose 7-phosphate kinase activity"/>
    <property type="evidence" value="ECO:0007669"/>
    <property type="project" value="UniProtKB-UniRule"/>
</dbReference>
<dbReference type="GO" id="GO:0033786">
    <property type="term" value="F:heptose-1-phosphate adenylyltransferase activity"/>
    <property type="evidence" value="ECO:0007669"/>
    <property type="project" value="UniProtKB-UniRule"/>
</dbReference>
<dbReference type="GO" id="GO:0016773">
    <property type="term" value="F:phosphotransferase activity, alcohol group as acceptor"/>
    <property type="evidence" value="ECO:0007669"/>
    <property type="project" value="InterPro"/>
</dbReference>
<dbReference type="GO" id="GO:0097171">
    <property type="term" value="P:ADP-L-glycero-beta-D-manno-heptose biosynthetic process"/>
    <property type="evidence" value="ECO:0007669"/>
    <property type="project" value="UniProtKB-UniPathway"/>
</dbReference>
<dbReference type="CDD" id="cd01172">
    <property type="entry name" value="RfaE_like"/>
    <property type="match status" value="1"/>
</dbReference>
<dbReference type="FunFam" id="3.40.1190.20:FF:000002">
    <property type="entry name" value="Bifunctional protein HldE"/>
    <property type="match status" value="1"/>
</dbReference>
<dbReference type="FunFam" id="3.40.50.620:FF:000028">
    <property type="entry name" value="Bifunctional protein HldE"/>
    <property type="match status" value="1"/>
</dbReference>
<dbReference type="Gene3D" id="3.40.1190.20">
    <property type="match status" value="1"/>
</dbReference>
<dbReference type="Gene3D" id="3.40.50.620">
    <property type="entry name" value="HUPs"/>
    <property type="match status" value="1"/>
</dbReference>
<dbReference type="HAMAP" id="MF_01603">
    <property type="entry name" value="HldE"/>
    <property type="match status" value="1"/>
</dbReference>
<dbReference type="InterPro" id="IPR023030">
    <property type="entry name" value="Bifunc_HldE"/>
</dbReference>
<dbReference type="InterPro" id="IPR002173">
    <property type="entry name" value="Carboh/pur_kinase_PfkB_CS"/>
</dbReference>
<dbReference type="InterPro" id="IPR004821">
    <property type="entry name" value="Cyt_trans-like"/>
</dbReference>
<dbReference type="InterPro" id="IPR011611">
    <property type="entry name" value="PfkB_dom"/>
</dbReference>
<dbReference type="InterPro" id="IPR011913">
    <property type="entry name" value="RfaE_dom_I"/>
</dbReference>
<dbReference type="InterPro" id="IPR011914">
    <property type="entry name" value="RfaE_dom_II"/>
</dbReference>
<dbReference type="InterPro" id="IPR029056">
    <property type="entry name" value="Ribokinase-like"/>
</dbReference>
<dbReference type="InterPro" id="IPR014729">
    <property type="entry name" value="Rossmann-like_a/b/a_fold"/>
</dbReference>
<dbReference type="NCBIfam" id="TIGR00125">
    <property type="entry name" value="cyt_tran_rel"/>
    <property type="match status" value="1"/>
</dbReference>
<dbReference type="NCBIfam" id="NF008454">
    <property type="entry name" value="PRK11316.1"/>
    <property type="match status" value="1"/>
</dbReference>
<dbReference type="NCBIfam" id="TIGR02198">
    <property type="entry name" value="rfaE_dom_I"/>
    <property type="match status" value="1"/>
</dbReference>
<dbReference type="NCBIfam" id="TIGR02199">
    <property type="entry name" value="rfaE_dom_II"/>
    <property type="match status" value="1"/>
</dbReference>
<dbReference type="PANTHER" id="PTHR46969">
    <property type="entry name" value="BIFUNCTIONAL PROTEIN HLDE"/>
    <property type="match status" value="1"/>
</dbReference>
<dbReference type="PANTHER" id="PTHR46969:SF1">
    <property type="entry name" value="BIFUNCTIONAL PROTEIN HLDE"/>
    <property type="match status" value="1"/>
</dbReference>
<dbReference type="Pfam" id="PF01467">
    <property type="entry name" value="CTP_transf_like"/>
    <property type="match status" value="1"/>
</dbReference>
<dbReference type="Pfam" id="PF00294">
    <property type="entry name" value="PfkB"/>
    <property type="match status" value="1"/>
</dbReference>
<dbReference type="SUPFAM" id="SSF52374">
    <property type="entry name" value="Nucleotidylyl transferase"/>
    <property type="match status" value="1"/>
</dbReference>
<dbReference type="SUPFAM" id="SSF53613">
    <property type="entry name" value="Ribokinase-like"/>
    <property type="match status" value="1"/>
</dbReference>
<dbReference type="PROSITE" id="PS00583">
    <property type="entry name" value="PFKB_KINASES_1"/>
    <property type="match status" value="1"/>
</dbReference>
<proteinExistence type="inferred from homology"/>
<name>HLDE_PSEPW</name>
<keyword id="KW-0067">ATP-binding</keyword>
<keyword id="KW-0119">Carbohydrate metabolism</keyword>
<keyword id="KW-0418">Kinase</keyword>
<keyword id="KW-0511">Multifunctional enzyme</keyword>
<keyword id="KW-0547">Nucleotide-binding</keyword>
<keyword id="KW-0548">Nucleotidyltransferase</keyword>
<keyword id="KW-0808">Transferase</keyword>
<protein>
    <recommendedName>
        <fullName evidence="1">Bifunctional protein HldE</fullName>
    </recommendedName>
    <domain>
        <recommendedName>
            <fullName evidence="1">D-beta-D-heptose 7-phosphate kinase</fullName>
            <ecNumber evidence="1">2.7.1.167</ecNumber>
        </recommendedName>
        <alternativeName>
            <fullName evidence="1">D-beta-D-heptose 7-phosphotransferase</fullName>
        </alternativeName>
        <alternativeName>
            <fullName evidence="1">D-glycero-beta-D-manno-heptose-7-phosphate kinase</fullName>
        </alternativeName>
    </domain>
    <domain>
        <recommendedName>
            <fullName evidence="1">D-beta-D-heptose 1-phosphate adenylyltransferase</fullName>
            <ecNumber evidence="1">2.7.7.70</ecNumber>
        </recommendedName>
        <alternativeName>
            <fullName evidence="1">D-glycero-beta-D-manno-heptose 1-phosphate adenylyltransferase</fullName>
        </alternativeName>
    </domain>
</protein>
<sequence length="473" mass="49886">MKLSMPRFDQAPVLVVGDVMLDRYWHGGTSRISPEAPVPVVKVDQIEDRPGGAANVALNIAALGAPAALIGVTGQDEAADSLANSLQAAGVRSVFQRIAHQPTIVKLRVMSRHQQLLRIDFEEPFATDPLSLGAEVESLLEGVKVLVLSDYGKGALKNHQSLIQAARAKGIPVLADPKGKDFSIYRGASLITPNLSEFETIVGRCADEAELVAKGLQLLLDLDLGALLVTRGEHGMTLLRTGQPALHLPARAREVFDVTGAGDTVISTLAAAIAAGEDLPHAVGLANLAAGIVVGKLGTAAISAPELRRAIQREEGSERGVLGLEQLLLAIDDARAHNEKIVFTNGCFDILHAGHVTYLEQARAQGDRLIVAVNDDASVSRLKGPGRPINSVDRRMAVLAGLGAVDWVISFPEGTPENLLSQVKPDVLVKGGDYGIDQVVGADIVKGYGGTVKVLGLVENSSTTAIVEKIRKN</sequence>
<feature type="chain" id="PRO_1000148132" description="Bifunctional protein HldE">
    <location>
        <begin position="1"/>
        <end position="473"/>
    </location>
</feature>
<feature type="region of interest" description="Ribokinase">
    <location>
        <begin position="1"/>
        <end position="317"/>
    </location>
</feature>
<feature type="region of interest" description="Cytidylyltransferase">
    <location>
        <begin position="343"/>
        <end position="473"/>
    </location>
</feature>
<feature type="active site" evidence="1">
    <location>
        <position position="263"/>
    </location>
</feature>
<feature type="binding site" evidence="1">
    <location>
        <begin position="194"/>
        <end position="197"/>
    </location>
    <ligand>
        <name>ATP</name>
        <dbReference type="ChEBI" id="CHEBI:30616"/>
    </ligand>
</feature>
<evidence type="ECO:0000255" key="1">
    <source>
        <dbReference type="HAMAP-Rule" id="MF_01603"/>
    </source>
</evidence>
<gene>
    <name evidence="1" type="primary">hldE</name>
    <name type="ordered locus">PputW619_0532</name>
</gene>